<organism>
    <name type="scientific">Yersinia pseudotuberculosis serotype IB (strain PB1/+)</name>
    <dbReference type="NCBI Taxonomy" id="502801"/>
    <lineage>
        <taxon>Bacteria</taxon>
        <taxon>Pseudomonadati</taxon>
        <taxon>Pseudomonadota</taxon>
        <taxon>Gammaproteobacteria</taxon>
        <taxon>Enterobacterales</taxon>
        <taxon>Yersiniaceae</taxon>
        <taxon>Yersinia</taxon>
    </lineage>
</organism>
<keyword id="KW-0997">Cell inner membrane</keyword>
<keyword id="KW-1003">Cell membrane</keyword>
<keyword id="KW-0472">Membrane</keyword>
<keyword id="KW-0812">Transmembrane</keyword>
<keyword id="KW-1133">Transmembrane helix</keyword>
<keyword id="KW-0813">Transport</keyword>
<accession>B2K306</accession>
<sequence>MALVSQARSLGKYFLLFDNLLVVLGFFVVFPLISIRFVDQLGWAALVVGLALGLRQLVQQGLGIFGGAIADRFGAKPMIVTGMLMRAAGFALMAMADEPWILWLACALSGLGGTLFDPPRTALVIKLTRPHERGRFYSLLMMQDSAGAVIGALIGSWLLQYDFHFVCWTGAAIFVLAAGWNAWLLPAYRISTVRAPMKEGLMRVLRDRRFVTYVLTLTGYYMLAVQVMLMLPIVVNELAGSPAAVKWMYAIEAALSLTLLYPLARWSEKRFSLEQRLMAGLLIMTLSLFPIGMITHLQTLFMFICFFYMGSILAEPARETLGASLADSRARGSYMGFSRLGLALGGALGYTGGGWMYDTGKTLDMPELPWFLLGIIGLITLAGLYWQFNRRRIESAMLSSS</sequence>
<protein>
    <recommendedName>
        <fullName evidence="1">Multidrug resistance protein MdtH</fullName>
    </recommendedName>
</protein>
<proteinExistence type="inferred from homology"/>
<dbReference type="EMBL" id="CP001048">
    <property type="protein sequence ID" value="ACC89045.1"/>
    <property type="molecule type" value="Genomic_DNA"/>
</dbReference>
<dbReference type="RefSeq" id="WP_002211217.1">
    <property type="nucleotide sequence ID" value="NZ_CP009780.1"/>
</dbReference>
<dbReference type="SMR" id="B2K306"/>
<dbReference type="GeneID" id="57976620"/>
<dbReference type="KEGG" id="ypb:YPTS_2080"/>
<dbReference type="PATRIC" id="fig|502801.10.peg.1469"/>
<dbReference type="GO" id="GO:0005886">
    <property type="term" value="C:plasma membrane"/>
    <property type="evidence" value="ECO:0007669"/>
    <property type="project" value="UniProtKB-SubCell"/>
</dbReference>
<dbReference type="GO" id="GO:0022857">
    <property type="term" value="F:transmembrane transporter activity"/>
    <property type="evidence" value="ECO:0007669"/>
    <property type="project" value="UniProtKB-UniRule"/>
</dbReference>
<dbReference type="CDD" id="cd17329">
    <property type="entry name" value="MFS_MdtH_MDR_like"/>
    <property type="match status" value="1"/>
</dbReference>
<dbReference type="Gene3D" id="1.20.1250.20">
    <property type="entry name" value="MFS general substrate transporter like domains"/>
    <property type="match status" value="1"/>
</dbReference>
<dbReference type="HAMAP" id="MF_01529">
    <property type="entry name" value="MFS_MdtH"/>
    <property type="match status" value="1"/>
</dbReference>
<dbReference type="InterPro" id="IPR011701">
    <property type="entry name" value="MFS"/>
</dbReference>
<dbReference type="InterPro" id="IPR020846">
    <property type="entry name" value="MFS_dom"/>
</dbReference>
<dbReference type="InterPro" id="IPR036259">
    <property type="entry name" value="MFS_trans_sf"/>
</dbReference>
<dbReference type="InterPro" id="IPR050171">
    <property type="entry name" value="MFS_Transporters"/>
</dbReference>
<dbReference type="InterPro" id="IPR022855">
    <property type="entry name" value="Multidrug-R_MdtH"/>
</dbReference>
<dbReference type="NCBIfam" id="NF008650">
    <property type="entry name" value="PRK11646.1"/>
    <property type="match status" value="1"/>
</dbReference>
<dbReference type="PANTHER" id="PTHR23517:SF2">
    <property type="entry name" value="MULTIDRUG RESISTANCE PROTEIN MDTH"/>
    <property type="match status" value="1"/>
</dbReference>
<dbReference type="PANTHER" id="PTHR23517">
    <property type="entry name" value="RESISTANCE PROTEIN MDTM, PUTATIVE-RELATED-RELATED"/>
    <property type="match status" value="1"/>
</dbReference>
<dbReference type="Pfam" id="PF07690">
    <property type="entry name" value="MFS_1"/>
    <property type="match status" value="1"/>
</dbReference>
<dbReference type="SUPFAM" id="SSF103473">
    <property type="entry name" value="MFS general substrate transporter"/>
    <property type="match status" value="1"/>
</dbReference>
<dbReference type="PROSITE" id="PS50850">
    <property type="entry name" value="MFS"/>
    <property type="match status" value="1"/>
</dbReference>
<gene>
    <name evidence="1" type="primary">mdtH</name>
    <name type="ordered locus">YPTS_2080</name>
</gene>
<feature type="chain" id="PRO_1000200814" description="Multidrug resistance protein MdtH">
    <location>
        <begin position="1"/>
        <end position="401"/>
    </location>
</feature>
<feature type="transmembrane region" description="Helical" evidence="1">
    <location>
        <begin position="13"/>
        <end position="33"/>
    </location>
</feature>
<feature type="transmembrane region" description="Helical" evidence="1">
    <location>
        <begin position="34"/>
        <end position="54"/>
    </location>
</feature>
<feature type="transmembrane region" description="Helical" evidence="1">
    <location>
        <begin position="99"/>
        <end position="116"/>
    </location>
</feature>
<feature type="transmembrane region" description="Helical" evidence="1">
    <location>
        <begin position="139"/>
        <end position="159"/>
    </location>
</feature>
<feature type="transmembrane region" description="Helical" evidence="1">
    <location>
        <begin position="165"/>
        <end position="185"/>
    </location>
</feature>
<feature type="transmembrane region" description="Helical" evidence="1">
    <location>
        <begin position="214"/>
        <end position="234"/>
    </location>
</feature>
<feature type="transmembrane region" description="Helical" evidence="1">
    <location>
        <begin position="243"/>
        <end position="263"/>
    </location>
</feature>
<feature type="transmembrane region" description="Helical" evidence="1">
    <location>
        <begin position="277"/>
        <end position="297"/>
    </location>
</feature>
<feature type="transmembrane region" description="Helical" evidence="1">
    <location>
        <begin position="299"/>
        <end position="319"/>
    </location>
</feature>
<feature type="transmembrane region" description="Helical" evidence="1">
    <location>
        <begin position="340"/>
        <end position="360"/>
    </location>
</feature>
<feature type="transmembrane region" description="Helical" evidence="1">
    <location>
        <begin position="368"/>
        <end position="388"/>
    </location>
</feature>
<evidence type="ECO:0000255" key="1">
    <source>
        <dbReference type="HAMAP-Rule" id="MF_01529"/>
    </source>
</evidence>
<comment type="subcellular location">
    <subcellularLocation>
        <location evidence="1">Cell inner membrane</location>
        <topology evidence="1">Multi-pass membrane protein</topology>
    </subcellularLocation>
</comment>
<comment type="similarity">
    <text evidence="1">Belongs to the major facilitator superfamily. DHA1 family. MdtH (TC 2.A.1.2.21) subfamily.</text>
</comment>
<reference key="1">
    <citation type="submission" date="2008-04" db="EMBL/GenBank/DDBJ databases">
        <title>Complete sequence of Yersinia pseudotuberculosis PB1/+.</title>
        <authorList>
            <person name="Copeland A."/>
            <person name="Lucas S."/>
            <person name="Lapidus A."/>
            <person name="Glavina del Rio T."/>
            <person name="Dalin E."/>
            <person name="Tice H."/>
            <person name="Bruce D."/>
            <person name="Goodwin L."/>
            <person name="Pitluck S."/>
            <person name="Munk A.C."/>
            <person name="Brettin T."/>
            <person name="Detter J.C."/>
            <person name="Han C."/>
            <person name="Tapia R."/>
            <person name="Schmutz J."/>
            <person name="Larimer F."/>
            <person name="Land M."/>
            <person name="Hauser L."/>
            <person name="Challacombe J.F."/>
            <person name="Green L."/>
            <person name="Lindler L.E."/>
            <person name="Nikolich M.P."/>
            <person name="Richardson P."/>
        </authorList>
    </citation>
    <scope>NUCLEOTIDE SEQUENCE [LARGE SCALE GENOMIC DNA]</scope>
    <source>
        <strain>PB1/+</strain>
    </source>
</reference>
<name>MDTH_YERPB</name>